<evidence type="ECO:0000255" key="1">
    <source>
        <dbReference type="HAMAP-Rule" id="MF_00655"/>
    </source>
</evidence>
<comment type="function">
    <text evidence="1">Functions as a PqqA binding protein and presents PqqA to PqqE, in the pyrroloquinoline quinone (PQQ) biosynthetic pathway.</text>
</comment>
<comment type="pathway">
    <text evidence="1">Cofactor biosynthesis; pyrroloquinoline quinone biosynthesis.</text>
</comment>
<comment type="subunit">
    <text evidence="1">Monomer. Interacts with PqqE.</text>
</comment>
<comment type="similarity">
    <text evidence="1">Belongs to the PqqD family.</text>
</comment>
<proteinExistence type="inferred from homology"/>
<dbReference type="EMBL" id="CP000050">
    <property type="protein sequence ID" value="AAY48240.1"/>
    <property type="molecule type" value="Genomic_DNA"/>
</dbReference>
<dbReference type="RefSeq" id="WP_011038062.1">
    <property type="nucleotide sequence ID" value="NZ_CP155948.1"/>
</dbReference>
<dbReference type="SMR" id="Q4UXI3"/>
<dbReference type="KEGG" id="xcb:XC_1170"/>
<dbReference type="HOGENOM" id="CLU_163864_0_0_6"/>
<dbReference type="UniPathway" id="UPA00539"/>
<dbReference type="Proteomes" id="UP000000420">
    <property type="component" value="Chromosome"/>
</dbReference>
<dbReference type="GO" id="GO:0048038">
    <property type="term" value="F:quinone binding"/>
    <property type="evidence" value="ECO:0007669"/>
    <property type="project" value="InterPro"/>
</dbReference>
<dbReference type="GO" id="GO:0018189">
    <property type="term" value="P:pyrroloquinoline quinone biosynthetic process"/>
    <property type="evidence" value="ECO:0007669"/>
    <property type="project" value="UniProtKB-UniRule"/>
</dbReference>
<dbReference type="Gene3D" id="1.10.10.1150">
    <property type="entry name" value="Coenzyme PQQ synthesis protein D (PqqD)"/>
    <property type="match status" value="1"/>
</dbReference>
<dbReference type="HAMAP" id="MF_00655">
    <property type="entry name" value="PQQ_syn_PqqD"/>
    <property type="match status" value="1"/>
</dbReference>
<dbReference type="InterPro" id="IPR008792">
    <property type="entry name" value="PQQD"/>
</dbReference>
<dbReference type="InterPro" id="IPR022479">
    <property type="entry name" value="PqqD_bac"/>
</dbReference>
<dbReference type="InterPro" id="IPR041881">
    <property type="entry name" value="PqqD_sf"/>
</dbReference>
<dbReference type="NCBIfam" id="TIGR03859">
    <property type="entry name" value="PQQ_PqqD"/>
    <property type="match status" value="1"/>
</dbReference>
<dbReference type="Pfam" id="PF05402">
    <property type="entry name" value="PqqD"/>
    <property type="match status" value="1"/>
</dbReference>
<name>PQQD_XANC8</name>
<accession>Q4UXI3</accession>
<feature type="chain" id="PRO_1000061694" description="PqqA binding protein">
    <location>
        <begin position="1"/>
        <end position="92"/>
    </location>
</feature>
<protein>
    <recommendedName>
        <fullName evidence="1">PqqA binding protein</fullName>
    </recommendedName>
    <alternativeName>
        <fullName evidence="1">Coenzyme PQQ synthesis protein D</fullName>
    </alternativeName>
    <alternativeName>
        <fullName evidence="1">Pyrroloquinoline quinone biosynthesis protein D</fullName>
    </alternativeName>
</protein>
<reference key="1">
    <citation type="journal article" date="2005" name="Genome Res.">
        <title>Comparative and functional genomic analyses of the pathogenicity of phytopathogen Xanthomonas campestris pv. campestris.</title>
        <authorList>
            <person name="Qian W."/>
            <person name="Jia Y."/>
            <person name="Ren S.-X."/>
            <person name="He Y.-Q."/>
            <person name="Feng J.-X."/>
            <person name="Lu L.-F."/>
            <person name="Sun Q."/>
            <person name="Ying G."/>
            <person name="Tang D.-J."/>
            <person name="Tang H."/>
            <person name="Wu W."/>
            <person name="Hao P."/>
            <person name="Wang L."/>
            <person name="Jiang B.-L."/>
            <person name="Zeng S."/>
            <person name="Gu W.-Y."/>
            <person name="Lu G."/>
            <person name="Rong L."/>
            <person name="Tian Y."/>
            <person name="Yao Z."/>
            <person name="Fu G."/>
            <person name="Chen B."/>
            <person name="Fang R."/>
            <person name="Qiang B."/>
            <person name="Chen Z."/>
            <person name="Zhao G.-P."/>
            <person name="Tang J.-L."/>
            <person name="He C."/>
        </authorList>
    </citation>
    <scope>NUCLEOTIDE SEQUENCE [LARGE SCALE GENOMIC DNA]</scope>
    <source>
        <strain>8004</strain>
    </source>
</reference>
<gene>
    <name evidence="1" type="primary">pqqD</name>
    <name type="ordered locus">XC_1170</name>
</gene>
<organism>
    <name type="scientific">Xanthomonas campestris pv. campestris (strain 8004)</name>
    <dbReference type="NCBI Taxonomy" id="314565"/>
    <lineage>
        <taxon>Bacteria</taxon>
        <taxon>Pseudomonadati</taxon>
        <taxon>Pseudomonadota</taxon>
        <taxon>Gammaproteobacteria</taxon>
        <taxon>Lysobacterales</taxon>
        <taxon>Lysobacteraceae</taxon>
        <taxon>Xanthomonas</taxon>
    </lineage>
</organism>
<sequence>MSTISRDSCPALRAGVRLQHDRARDQWVLLAPERVVELDDIALVVAQRYDGTQSLAQIAQTLAAEFDADASEIETDVIELTTTLHQKRLLRL</sequence>
<keyword id="KW-0884">PQQ biosynthesis</keyword>